<dbReference type="EC" id="3.4.21.-"/>
<dbReference type="EMBL" id="BA000033">
    <property type="protein sequence ID" value="BAB95618.1"/>
    <property type="molecule type" value="Genomic_DNA"/>
</dbReference>
<dbReference type="RefSeq" id="WP_001038865.1">
    <property type="nucleotide sequence ID" value="NC_003923.1"/>
</dbReference>
<dbReference type="SMR" id="Q8NVX7"/>
<dbReference type="MEROPS" id="S01.283"/>
<dbReference type="KEGG" id="sam:MW1753"/>
<dbReference type="HOGENOM" id="CLU_073589_2_0_9"/>
<dbReference type="GO" id="GO:0005576">
    <property type="term" value="C:extracellular region"/>
    <property type="evidence" value="ECO:0007669"/>
    <property type="project" value="UniProtKB-SubCell"/>
</dbReference>
<dbReference type="GO" id="GO:0004252">
    <property type="term" value="F:serine-type endopeptidase activity"/>
    <property type="evidence" value="ECO:0007669"/>
    <property type="project" value="InterPro"/>
</dbReference>
<dbReference type="GO" id="GO:0006508">
    <property type="term" value="P:proteolysis"/>
    <property type="evidence" value="ECO:0007669"/>
    <property type="project" value="UniProtKB-KW"/>
</dbReference>
<dbReference type="Gene3D" id="2.40.10.10">
    <property type="entry name" value="Trypsin-like serine proteases"/>
    <property type="match status" value="2"/>
</dbReference>
<dbReference type="InterPro" id="IPR009003">
    <property type="entry name" value="Peptidase_S1_PA"/>
</dbReference>
<dbReference type="InterPro" id="IPR043504">
    <property type="entry name" value="Peptidase_S1_PA_chymotrypsin"/>
</dbReference>
<dbReference type="InterPro" id="IPR008256">
    <property type="entry name" value="Peptidase_S1B"/>
</dbReference>
<dbReference type="InterPro" id="IPR008353">
    <property type="entry name" value="Peptidase_S1B_tx"/>
</dbReference>
<dbReference type="InterPro" id="IPR001254">
    <property type="entry name" value="Trypsin_dom"/>
</dbReference>
<dbReference type="InterPro" id="IPR028301">
    <property type="entry name" value="V8_his_AS"/>
</dbReference>
<dbReference type="PANTHER" id="PTHR43019:SF23">
    <property type="entry name" value="PROTEASE DO-LIKE 5, CHLOROPLASTIC"/>
    <property type="match status" value="1"/>
</dbReference>
<dbReference type="PANTHER" id="PTHR43019">
    <property type="entry name" value="SERINE ENDOPROTEASE DEGS"/>
    <property type="match status" value="1"/>
</dbReference>
<dbReference type="Pfam" id="PF00089">
    <property type="entry name" value="Trypsin"/>
    <property type="match status" value="1"/>
</dbReference>
<dbReference type="PRINTS" id="PR01774">
    <property type="entry name" value="EXFOLTOXIN"/>
</dbReference>
<dbReference type="PRINTS" id="PR00839">
    <property type="entry name" value="V8PROTEASE"/>
</dbReference>
<dbReference type="SUPFAM" id="SSF50494">
    <property type="entry name" value="Trypsin-like serine proteases"/>
    <property type="match status" value="1"/>
</dbReference>
<dbReference type="PROSITE" id="PS00672">
    <property type="entry name" value="V8_HIS"/>
    <property type="match status" value="1"/>
</dbReference>
<accession>Q8NVX7</accession>
<organism>
    <name type="scientific">Staphylococcus aureus (strain MW2)</name>
    <dbReference type="NCBI Taxonomy" id="196620"/>
    <lineage>
        <taxon>Bacteria</taxon>
        <taxon>Bacillati</taxon>
        <taxon>Bacillota</taxon>
        <taxon>Bacilli</taxon>
        <taxon>Bacillales</taxon>
        <taxon>Staphylococcaceae</taxon>
        <taxon>Staphylococcus</taxon>
    </lineage>
</organism>
<feature type="signal peptide" evidence="1">
    <location>
        <begin position="1"/>
        <end position="36"/>
    </location>
</feature>
<feature type="chain" id="PRO_0000359558" description="Serine protease SplC">
    <location>
        <begin position="37"/>
        <end position="239"/>
    </location>
</feature>
<feature type="active site" description="Charge relay system" evidence="1">
    <location>
        <position position="75"/>
    </location>
</feature>
<feature type="active site" description="Charge relay system" evidence="1">
    <location>
        <position position="113"/>
    </location>
</feature>
<feature type="active site" description="Charge relay system" evidence="1">
    <location>
        <position position="193"/>
    </location>
</feature>
<comment type="subcellular location">
    <subcellularLocation>
        <location evidence="1">Secreted</location>
    </subcellularLocation>
</comment>
<comment type="similarity">
    <text evidence="2">Belongs to the peptidase S1B family.</text>
</comment>
<protein>
    <recommendedName>
        <fullName>Serine protease SplC</fullName>
        <ecNumber>3.4.21.-</ecNumber>
    </recommendedName>
</protein>
<gene>
    <name type="primary">splC</name>
    <name type="ordered locus">MW1753</name>
</gene>
<sequence length="239" mass="26065">MNKNIVIKSMAALAILTSVTGINAAVVEETQQIANAEKNVTQVKDTNIFPYNGVVSFKDATGFVIGKNTIITNKHVSKDYKVGDRITAHPDGDKGNGGIYKIKSISDYPGDEDISVMNIEEQAVERGPKGFNFNENVQALNFAKDAKVDDKIKVIGYPLPAQNSFKQFESTGTIKRIKDNILNFDAYIEPGNSGSPVLNSNNEVIGVVYGGIGKIGSEYNGAVYFTPQIKDFIQKHIEQ</sequence>
<evidence type="ECO:0000250" key="1"/>
<evidence type="ECO:0000305" key="2"/>
<name>SPLC_STAAW</name>
<keyword id="KW-0378">Hydrolase</keyword>
<keyword id="KW-0645">Protease</keyword>
<keyword id="KW-0964">Secreted</keyword>
<keyword id="KW-0720">Serine protease</keyword>
<keyword id="KW-0732">Signal</keyword>
<reference key="1">
    <citation type="journal article" date="2002" name="Lancet">
        <title>Genome and virulence determinants of high virulence community-acquired MRSA.</title>
        <authorList>
            <person name="Baba T."/>
            <person name="Takeuchi F."/>
            <person name="Kuroda M."/>
            <person name="Yuzawa H."/>
            <person name="Aoki K."/>
            <person name="Oguchi A."/>
            <person name="Nagai Y."/>
            <person name="Iwama N."/>
            <person name="Asano K."/>
            <person name="Naimi T."/>
            <person name="Kuroda H."/>
            <person name="Cui L."/>
            <person name="Yamamoto K."/>
            <person name="Hiramatsu K."/>
        </authorList>
    </citation>
    <scope>NUCLEOTIDE SEQUENCE [LARGE SCALE GENOMIC DNA]</scope>
    <source>
        <strain>MW2</strain>
    </source>
</reference>
<proteinExistence type="inferred from homology"/>